<keyword id="KW-0711">Selenium</keyword>
<keyword id="KW-0808">Transferase</keyword>
<organism>
    <name type="scientific">Bordetella bronchiseptica (strain ATCC BAA-588 / NCTC 13252 / RB50)</name>
    <name type="common">Alcaligenes bronchisepticus</name>
    <dbReference type="NCBI Taxonomy" id="257310"/>
    <lineage>
        <taxon>Bacteria</taxon>
        <taxon>Pseudomonadati</taxon>
        <taxon>Pseudomonadota</taxon>
        <taxon>Betaproteobacteria</taxon>
        <taxon>Burkholderiales</taxon>
        <taxon>Alcaligenaceae</taxon>
        <taxon>Bordetella</taxon>
    </lineage>
</organism>
<comment type="function">
    <text evidence="1">Involved in the post-transcriptional modification of the uridine at the wobble position (U34) of tRNA(Lys), tRNA(Glu) and tRNA(Gln). Catalyzes the conversion of 2-thiouridine (S2U-RNA) to 2-selenouridine (Se2U-RNA). Acts in a two-step process involving geranylation of 2-thiouridine (S2U) to S-geranyl-2-thiouridine (geS2U) and subsequent selenation of the latter derivative to 2-selenouridine (Se2U) in the tRNA chain.</text>
</comment>
<comment type="catalytic activity">
    <reaction evidence="1">
        <text>5-methylaminomethyl-2-thiouridine(34) in tRNA + selenophosphate + (2E)-geranyl diphosphate + H2O + H(+) = 5-methylaminomethyl-2-selenouridine(34) in tRNA + (2E)-thiogeraniol + phosphate + diphosphate</text>
        <dbReference type="Rhea" id="RHEA:42716"/>
        <dbReference type="Rhea" id="RHEA-COMP:10195"/>
        <dbReference type="Rhea" id="RHEA-COMP:10196"/>
        <dbReference type="ChEBI" id="CHEBI:15377"/>
        <dbReference type="ChEBI" id="CHEBI:15378"/>
        <dbReference type="ChEBI" id="CHEBI:16144"/>
        <dbReference type="ChEBI" id="CHEBI:33019"/>
        <dbReference type="ChEBI" id="CHEBI:43474"/>
        <dbReference type="ChEBI" id="CHEBI:58057"/>
        <dbReference type="ChEBI" id="CHEBI:74455"/>
        <dbReference type="ChEBI" id="CHEBI:82743"/>
        <dbReference type="ChEBI" id="CHEBI:143703"/>
        <dbReference type="EC" id="2.9.1.3"/>
    </reaction>
    <physiologicalReaction direction="left-to-right" evidence="1">
        <dbReference type="Rhea" id="RHEA:42717"/>
    </physiologicalReaction>
</comment>
<comment type="catalytic activity">
    <reaction evidence="1">
        <text>5-methylaminomethyl-2-thiouridine(34) in tRNA + (2E)-geranyl diphosphate = 5-methylaminomethyl-S-(2E)-geranyl-thiouridine(34) in tRNA + diphosphate</text>
        <dbReference type="Rhea" id="RHEA:14085"/>
        <dbReference type="Rhea" id="RHEA-COMP:10195"/>
        <dbReference type="Rhea" id="RHEA-COMP:14654"/>
        <dbReference type="ChEBI" id="CHEBI:33019"/>
        <dbReference type="ChEBI" id="CHEBI:58057"/>
        <dbReference type="ChEBI" id="CHEBI:74455"/>
        <dbReference type="ChEBI" id="CHEBI:140632"/>
    </reaction>
    <physiologicalReaction direction="left-to-right" evidence="1">
        <dbReference type="Rhea" id="RHEA:14086"/>
    </physiologicalReaction>
</comment>
<comment type="catalytic activity">
    <reaction evidence="1">
        <text>5-methylaminomethyl-S-(2E)-geranyl-thiouridine(34) in tRNA + selenophosphate + H(+) = 5-methylaminomethyl-2-(Se-phospho)selenouridine(34) in tRNA + (2E)-thiogeraniol</text>
        <dbReference type="Rhea" id="RHEA:60172"/>
        <dbReference type="Rhea" id="RHEA-COMP:14654"/>
        <dbReference type="Rhea" id="RHEA-COMP:15523"/>
        <dbReference type="ChEBI" id="CHEBI:15378"/>
        <dbReference type="ChEBI" id="CHEBI:16144"/>
        <dbReference type="ChEBI" id="CHEBI:140632"/>
        <dbReference type="ChEBI" id="CHEBI:143702"/>
        <dbReference type="ChEBI" id="CHEBI:143703"/>
    </reaction>
    <physiologicalReaction direction="left-to-right" evidence="1">
        <dbReference type="Rhea" id="RHEA:60173"/>
    </physiologicalReaction>
</comment>
<comment type="catalytic activity">
    <reaction evidence="1">
        <text>5-methylaminomethyl-2-(Se-phospho)selenouridine(34) in tRNA + H2O = 5-methylaminomethyl-2-selenouridine(34) in tRNA + phosphate</text>
        <dbReference type="Rhea" id="RHEA:60176"/>
        <dbReference type="Rhea" id="RHEA-COMP:10196"/>
        <dbReference type="Rhea" id="RHEA-COMP:15523"/>
        <dbReference type="ChEBI" id="CHEBI:15377"/>
        <dbReference type="ChEBI" id="CHEBI:43474"/>
        <dbReference type="ChEBI" id="CHEBI:82743"/>
        <dbReference type="ChEBI" id="CHEBI:143702"/>
    </reaction>
    <physiologicalReaction direction="left-to-right" evidence="1">
        <dbReference type="Rhea" id="RHEA:60177"/>
    </physiologicalReaction>
</comment>
<comment type="subunit">
    <text evidence="1">Monomer.</text>
</comment>
<comment type="similarity">
    <text evidence="1">Belongs to the SelU family.</text>
</comment>
<gene>
    <name evidence="1" type="primary">selU</name>
    <name type="ordered locus">BB4739</name>
</gene>
<dbReference type="EC" id="2.9.1.3" evidence="1"/>
<dbReference type="EMBL" id="BX640451">
    <property type="protein sequence ID" value="CAE35102.1"/>
    <property type="molecule type" value="Genomic_DNA"/>
</dbReference>
<dbReference type="SMR" id="Q7WE96"/>
<dbReference type="KEGG" id="bbr:BB4739"/>
<dbReference type="eggNOG" id="COG2603">
    <property type="taxonomic scope" value="Bacteria"/>
</dbReference>
<dbReference type="HOGENOM" id="CLU_043456_1_0_4"/>
<dbReference type="Proteomes" id="UP000001027">
    <property type="component" value="Chromosome"/>
</dbReference>
<dbReference type="GO" id="GO:0016765">
    <property type="term" value="F:transferase activity, transferring alkyl or aryl (other than methyl) groups"/>
    <property type="evidence" value="ECO:0007669"/>
    <property type="project" value="UniProtKB-UniRule"/>
</dbReference>
<dbReference type="GO" id="GO:0043828">
    <property type="term" value="F:tRNA 2-selenouridine synthase activity"/>
    <property type="evidence" value="ECO:0007669"/>
    <property type="project" value="UniProtKB-EC"/>
</dbReference>
<dbReference type="GO" id="GO:0002098">
    <property type="term" value="P:tRNA wobble uridine modification"/>
    <property type="evidence" value="ECO:0007669"/>
    <property type="project" value="UniProtKB-UniRule"/>
</dbReference>
<dbReference type="CDD" id="cd01520">
    <property type="entry name" value="RHOD_YbbB"/>
    <property type="match status" value="1"/>
</dbReference>
<dbReference type="Gene3D" id="3.40.250.10">
    <property type="entry name" value="Rhodanese-like domain"/>
    <property type="match status" value="1"/>
</dbReference>
<dbReference type="HAMAP" id="MF_01622">
    <property type="entry name" value="tRNA_sel_U_synth"/>
    <property type="match status" value="1"/>
</dbReference>
<dbReference type="InterPro" id="IPR001763">
    <property type="entry name" value="Rhodanese-like_dom"/>
</dbReference>
<dbReference type="InterPro" id="IPR036873">
    <property type="entry name" value="Rhodanese-like_dom_sf"/>
</dbReference>
<dbReference type="InterPro" id="IPR017582">
    <property type="entry name" value="SelU"/>
</dbReference>
<dbReference type="NCBIfam" id="NF008750">
    <property type="entry name" value="PRK11784.1-2"/>
    <property type="match status" value="1"/>
</dbReference>
<dbReference type="NCBIfam" id="NF008751">
    <property type="entry name" value="PRK11784.1-3"/>
    <property type="match status" value="1"/>
</dbReference>
<dbReference type="NCBIfam" id="TIGR03167">
    <property type="entry name" value="tRNA_sel_U_synt"/>
    <property type="match status" value="1"/>
</dbReference>
<dbReference type="PANTHER" id="PTHR30401">
    <property type="entry name" value="TRNA 2-SELENOURIDINE SYNTHASE"/>
    <property type="match status" value="1"/>
</dbReference>
<dbReference type="PANTHER" id="PTHR30401:SF0">
    <property type="entry name" value="TRNA 2-SELENOURIDINE SYNTHASE"/>
    <property type="match status" value="1"/>
</dbReference>
<dbReference type="SMART" id="SM00450">
    <property type="entry name" value="RHOD"/>
    <property type="match status" value="1"/>
</dbReference>
<dbReference type="SUPFAM" id="SSF52821">
    <property type="entry name" value="Rhodanese/Cell cycle control phosphatase"/>
    <property type="match status" value="1"/>
</dbReference>
<dbReference type="PROSITE" id="PS50206">
    <property type="entry name" value="RHODANESE_3"/>
    <property type="match status" value="1"/>
</dbReference>
<protein>
    <recommendedName>
        <fullName evidence="1">tRNA 2-selenouridine synthase</fullName>
        <ecNumber evidence="1">2.9.1.3</ecNumber>
    </recommendedName>
</protein>
<reference key="1">
    <citation type="journal article" date="2003" name="Nat. Genet.">
        <title>Comparative analysis of the genome sequences of Bordetella pertussis, Bordetella parapertussis and Bordetella bronchiseptica.</title>
        <authorList>
            <person name="Parkhill J."/>
            <person name="Sebaihia M."/>
            <person name="Preston A."/>
            <person name="Murphy L.D."/>
            <person name="Thomson N.R."/>
            <person name="Harris D.E."/>
            <person name="Holden M.T.G."/>
            <person name="Churcher C.M."/>
            <person name="Bentley S.D."/>
            <person name="Mungall K.L."/>
            <person name="Cerdeno-Tarraga A.-M."/>
            <person name="Temple L."/>
            <person name="James K.D."/>
            <person name="Harris B."/>
            <person name="Quail M.A."/>
            <person name="Achtman M."/>
            <person name="Atkin R."/>
            <person name="Baker S."/>
            <person name="Basham D."/>
            <person name="Bason N."/>
            <person name="Cherevach I."/>
            <person name="Chillingworth T."/>
            <person name="Collins M."/>
            <person name="Cronin A."/>
            <person name="Davis P."/>
            <person name="Doggett J."/>
            <person name="Feltwell T."/>
            <person name="Goble A."/>
            <person name="Hamlin N."/>
            <person name="Hauser H."/>
            <person name="Holroyd S."/>
            <person name="Jagels K."/>
            <person name="Leather S."/>
            <person name="Moule S."/>
            <person name="Norberczak H."/>
            <person name="O'Neil S."/>
            <person name="Ormond D."/>
            <person name="Price C."/>
            <person name="Rabbinowitsch E."/>
            <person name="Rutter S."/>
            <person name="Sanders M."/>
            <person name="Saunders D."/>
            <person name="Seeger K."/>
            <person name="Sharp S."/>
            <person name="Simmonds M."/>
            <person name="Skelton J."/>
            <person name="Squares R."/>
            <person name="Squares S."/>
            <person name="Stevens K."/>
            <person name="Unwin L."/>
            <person name="Whitehead S."/>
            <person name="Barrell B.G."/>
            <person name="Maskell D.J."/>
        </authorList>
    </citation>
    <scope>NUCLEOTIDE SEQUENCE [LARGE SCALE GENOMIC DNA]</scope>
    <source>
        <strain>ATCC BAA-588 / NCTC 13252 / RB50</strain>
    </source>
</reference>
<sequence>MRADTRDFRALFLGDAPLLDTRAPVEFAKGAFPGAVNLPLMSDAERHKVGLCYKQQGQDAAIALGHRLVSGAVKAERVAAWAAFAQAHPEGYLYCFRGGLRSQISQAWLREEAGIAYPRVIGGYKAMRGFLLETIEQAIAECGFVVLGGMTGTGKTDVLRQLDHGLDLEAHAHHRGSSFGKHATGQPAQIDFDNRLAIDILKKRAAGCRQFVVEDESQAIGSCSLPFGLYQGMQRYPVVWLEDTQPARVQRILRDYVIDLCGEFTALHGEQDGFGLYAARLRQSLDNIARRLGGERHRRLAALMDEALARQAGDGSVDAHRAWIEPLLTEYYDPMYAYQRQAKAARIVFTGDHQEVLDYLRGPGRALP</sequence>
<evidence type="ECO:0000255" key="1">
    <source>
        <dbReference type="HAMAP-Rule" id="MF_01622"/>
    </source>
</evidence>
<feature type="chain" id="PRO_0000210857" description="tRNA 2-selenouridine synthase">
    <location>
        <begin position="1"/>
        <end position="368"/>
    </location>
</feature>
<feature type="domain" description="Rhodanese" evidence="1">
    <location>
        <begin position="12"/>
        <end position="136"/>
    </location>
</feature>
<feature type="active site" description="S-selanylcysteine intermediate" evidence="1">
    <location>
        <position position="95"/>
    </location>
</feature>
<proteinExistence type="inferred from homology"/>
<name>SELU_BORBR</name>
<accession>Q7WE96</accession>